<name>CIPKM_ORYSJ</name>
<gene>
    <name type="primary">CIPK22</name>
    <name type="ordered locus">Os05g0334750</name>
    <name type="ordered locus">Os05g0334800</name>
    <name type="ordered locus">LOC_Os05g26940</name>
    <name type="ORF">OSJNBa0049D13.5</name>
</gene>
<protein>
    <recommendedName>
        <fullName>CBL-interacting protein kinase 22</fullName>
        <ecNumber>2.7.11.1</ecNumber>
    </recommendedName>
    <alternativeName>
        <fullName>OsCIPK22</fullName>
    </alternativeName>
</protein>
<sequence>MPPAGDDESPAATGDGYSKKVLQGRYELGRVLGQGASSKVYRARDARTGAHVAVKAIRKQQQPHHHPSCRSPEAAAAARRCVEVEREVAALRRVRGHPHVVALLDVLATRSTVYLVLELASGGSVLSALDSRGGGHYDEPAARRLFAQLASAVAHAHSLGVFHRDIKPENLLLDERGDLRLTDFGLSAFADADQHLGATDGLAATHCGSPAYVAPEILLKRRYDASKADVWSCGVVLFVLTAGYLPFNDGNLMAMYRKICAAKFRCPKWCSQELRSLIGRMLDPEPDTRIKIGEIFDHPWLQQDGSSSSFGMIQAASSHSKPEVEKWEAELEQAMELNAFDIIGFASGCDLSGLIGPLPDRVRFVLPGGDSKSVLDKVEKLGREEGLVVRRKEEEWCGGVHVEATSGKFTAYVRVNLLPKKILMIEAERVIGSEIPKFWHQLQIGNLLVRK</sequence>
<accession>Q5KQF5</accession>
<accession>A0A0P0WKY9</accession>
<comment type="function">
    <text evidence="1">CIPK serine-threonine protein kinases interact with CBL proteins. Binding of a CBL protein to the regulatory NAF domain of CIPK protein lead to the activation of the kinase in a calcium-dependent manner (By similarity).</text>
</comment>
<comment type="catalytic activity">
    <reaction>
        <text>L-seryl-[protein] + ATP = O-phospho-L-seryl-[protein] + ADP + H(+)</text>
        <dbReference type="Rhea" id="RHEA:17989"/>
        <dbReference type="Rhea" id="RHEA-COMP:9863"/>
        <dbReference type="Rhea" id="RHEA-COMP:11604"/>
        <dbReference type="ChEBI" id="CHEBI:15378"/>
        <dbReference type="ChEBI" id="CHEBI:29999"/>
        <dbReference type="ChEBI" id="CHEBI:30616"/>
        <dbReference type="ChEBI" id="CHEBI:83421"/>
        <dbReference type="ChEBI" id="CHEBI:456216"/>
        <dbReference type="EC" id="2.7.11.1"/>
    </reaction>
</comment>
<comment type="catalytic activity">
    <reaction>
        <text>L-threonyl-[protein] + ATP = O-phospho-L-threonyl-[protein] + ADP + H(+)</text>
        <dbReference type="Rhea" id="RHEA:46608"/>
        <dbReference type="Rhea" id="RHEA-COMP:11060"/>
        <dbReference type="Rhea" id="RHEA-COMP:11605"/>
        <dbReference type="ChEBI" id="CHEBI:15378"/>
        <dbReference type="ChEBI" id="CHEBI:30013"/>
        <dbReference type="ChEBI" id="CHEBI:30616"/>
        <dbReference type="ChEBI" id="CHEBI:61977"/>
        <dbReference type="ChEBI" id="CHEBI:456216"/>
        <dbReference type="EC" id="2.7.11.1"/>
    </reaction>
</comment>
<comment type="cofactor">
    <cofactor evidence="1">
        <name>Mn(2+)</name>
        <dbReference type="ChEBI" id="CHEBI:29035"/>
    </cofactor>
</comment>
<comment type="induction">
    <text evidence="5">By drought and salt stresses and abscisic acid (ABA).</text>
</comment>
<comment type="domain">
    <text evidence="1">The activation loop within the kinase domain is the target of phosphorylation/activation by upstream protein kinases. The PPI motif mediates the interaction with the ABI (abscisic acid-insensitive) phosphatases (By similarity).</text>
</comment>
<comment type="similarity">
    <text evidence="6">Belongs to the protein kinase superfamily. CAMK Ser/Thr protein kinase family. SNF1 subfamily.</text>
</comment>
<feature type="chain" id="PRO_0000338380" description="CBL-interacting protein kinase 22">
    <location>
        <begin position="1"/>
        <end position="451"/>
    </location>
</feature>
<feature type="domain" description="Protein kinase" evidence="2">
    <location>
        <begin position="26"/>
        <end position="301"/>
    </location>
</feature>
<feature type="domain" description="NAF" evidence="3">
    <location>
        <begin position="330"/>
        <end position="356"/>
    </location>
</feature>
<feature type="region of interest" description="Activation loop" evidence="1">
    <location>
        <begin position="183"/>
        <end position="216"/>
    </location>
</feature>
<feature type="region of interest" description="PPI" evidence="1">
    <location>
        <begin position="361"/>
        <end position="389"/>
    </location>
</feature>
<feature type="active site" description="Proton acceptor" evidence="2 4">
    <location>
        <position position="165"/>
    </location>
</feature>
<feature type="binding site" evidence="2">
    <location>
        <begin position="32"/>
        <end position="40"/>
    </location>
    <ligand>
        <name>ATP</name>
        <dbReference type="ChEBI" id="CHEBI:30616"/>
    </ligand>
</feature>
<feature type="binding site" evidence="2">
    <location>
        <position position="55"/>
    </location>
    <ligand>
        <name>ATP</name>
        <dbReference type="ChEBI" id="CHEBI:30616"/>
    </ligand>
</feature>
<organism>
    <name type="scientific">Oryza sativa subsp. japonica</name>
    <name type="common">Rice</name>
    <dbReference type="NCBI Taxonomy" id="39947"/>
    <lineage>
        <taxon>Eukaryota</taxon>
        <taxon>Viridiplantae</taxon>
        <taxon>Streptophyta</taxon>
        <taxon>Embryophyta</taxon>
        <taxon>Tracheophyta</taxon>
        <taxon>Spermatophyta</taxon>
        <taxon>Magnoliopsida</taxon>
        <taxon>Liliopsida</taxon>
        <taxon>Poales</taxon>
        <taxon>Poaceae</taxon>
        <taxon>BOP clade</taxon>
        <taxon>Oryzoideae</taxon>
        <taxon>Oryzeae</taxon>
        <taxon>Oryzinae</taxon>
        <taxon>Oryza</taxon>
        <taxon>Oryza sativa</taxon>
    </lineage>
</organism>
<reference key="1">
    <citation type="journal article" date="2005" name="Mol. Genet. Genomics">
        <title>A fine physical map of the rice chromosome 5.</title>
        <authorList>
            <person name="Cheng C.-H."/>
            <person name="Chung M.C."/>
            <person name="Liu S.-M."/>
            <person name="Chen S.-K."/>
            <person name="Kao F.Y."/>
            <person name="Lin S.-J."/>
            <person name="Hsiao S.-H."/>
            <person name="Tseng I.C."/>
            <person name="Hsing Y.-I.C."/>
            <person name="Wu H.-P."/>
            <person name="Chen C.-S."/>
            <person name="Shaw J.-F."/>
            <person name="Wu J."/>
            <person name="Matsumoto T."/>
            <person name="Sasaki T."/>
            <person name="Chen H.-C."/>
            <person name="Chow T.-Y."/>
        </authorList>
    </citation>
    <scope>NUCLEOTIDE SEQUENCE [LARGE SCALE GENOMIC DNA]</scope>
    <source>
        <strain>cv. Nipponbare</strain>
    </source>
</reference>
<reference key="2">
    <citation type="journal article" date="2005" name="Nature">
        <title>The map-based sequence of the rice genome.</title>
        <authorList>
            <consortium name="International rice genome sequencing project (IRGSP)"/>
        </authorList>
    </citation>
    <scope>NUCLEOTIDE SEQUENCE [LARGE SCALE GENOMIC DNA]</scope>
    <source>
        <strain>cv. Nipponbare</strain>
    </source>
</reference>
<reference key="3">
    <citation type="journal article" date="2013" name="Rice">
        <title>Improvement of the Oryza sativa Nipponbare reference genome using next generation sequence and optical map data.</title>
        <authorList>
            <person name="Kawahara Y."/>
            <person name="de la Bastide M."/>
            <person name="Hamilton J.P."/>
            <person name="Kanamori H."/>
            <person name="McCombie W.R."/>
            <person name="Ouyang S."/>
            <person name="Schwartz D.C."/>
            <person name="Tanaka T."/>
            <person name="Wu J."/>
            <person name="Zhou S."/>
            <person name="Childs K.L."/>
            <person name="Davidson R.M."/>
            <person name="Lin H."/>
            <person name="Quesada-Ocampo L."/>
            <person name="Vaillancourt B."/>
            <person name="Sakai H."/>
            <person name="Lee S.S."/>
            <person name="Kim J."/>
            <person name="Numa H."/>
            <person name="Itoh T."/>
            <person name="Buell C.R."/>
            <person name="Matsumoto T."/>
        </authorList>
    </citation>
    <scope>GENOME REANNOTATION</scope>
    <source>
        <strain>cv. Nipponbare</strain>
    </source>
</reference>
<reference key="4">
    <citation type="journal article" date="2004" name="Plant Physiol.">
        <title>Calcium sensors and their interacting protein kinases: genomics of the Arabidopsis and rice CBL-CIPK signaling networks.</title>
        <authorList>
            <person name="Kolukisaoglu U."/>
            <person name="Weinl S."/>
            <person name="Blazevic D."/>
            <person name="Batistic O."/>
            <person name="Kudla J."/>
        </authorList>
    </citation>
    <scope>GENE FAMILY</scope>
    <scope>NOMENCLATURE</scope>
</reference>
<reference key="5">
    <citation type="journal article" date="2007" name="Plant Physiol.">
        <title>Characterization of stress-responsive CIPK genes in rice for stress tolerance improvement.</title>
        <authorList>
            <person name="Xiang Y."/>
            <person name="Huang Y."/>
            <person name="Xiong L."/>
        </authorList>
    </citation>
    <scope>INDUCTION</scope>
</reference>
<proteinExistence type="evidence at transcript level"/>
<evidence type="ECO:0000250" key="1"/>
<evidence type="ECO:0000255" key="2">
    <source>
        <dbReference type="PROSITE-ProRule" id="PRU00159"/>
    </source>
</evidence>
<evidence type="ECO:0000255" key="3">
    <source>
        <dbReference type="PROSITE-ProRule" id="PRU00256"/>
    </source>
</evidence>
<evidence type="ECO:0000255" key="4">
    <source>
        <dbReference type="PROSITE-ProRule" id="PRU10027"/>
    </source>
</evidence>
<evidence type="ECO:0000269" key="5">
    <source>
    </source>
</evidence>
<evidence type="ECO:0000305" key="6"/>
<dbReference type="EC" id="2.7.11.1"/>
<dbReference type="EMBL" id="AC144739">
    <property type="protein sequence ID" value="AAW57782.1"/>
    <property type="molecule type" value="Genomic_DNA"/>
</dbReference>
<dbReference type="EMBL" id="AP014961">
    <property type="protein sequence ID" value="BAS93447.1"/>
    <property type="molecule type" value="Genomic_DNA"/>
</dbReference>
<dbReference type="SMR" id="Q5KQF5"/>
<dbReference type="FunCoup" id="Q5KQF5">
    <property type="interactions" value="61"/>
</dbReference>
<dbReference type="STRING" id="39947.Q5KQF5"/>
<dbReference type="PaxDb" id="39947-Q5KQF5"/>
<dbReference type="EnsemblPlants" id="Os05t0334750-00">
    <property type="protein sequence ID" value="Os05t0334750-00"/>
    <property type="gene ID" value="Os05g0334750"/>
</dbReference>
<dbReference type="GeneID" id="107275871"/>
<dbReference type="Gramene" id="Os05t0334750-00">
    <property type="protein sequence ID" value="Os05t0334750-00"/>
    <property type="gene ID" value="Os05g0334750"/>
</dbReference>
<dbReference type="KEGG" id="osa:107275871"/>
<dbReference type="eggNOG" id="KOG0583">
    <property type="taxonomic scope" value="Eukaryota"/>
</dbReference>
<dbReference type="HOGENOM" id="CLU_000288_59_0_1"/>
<dbReference type="InParanoid" id="Q5KQF5"/>
<dbReference type="OMA" id="CAFADRQ"/>
<dbReference type="OrthoDB" id="541276at2759"/>
<dbReference type="Proteomes" id="UP000000763">
    <property type="component" value="Chromosome 5"/>
</dbReference>
<dbReference type="Proteomes" id="UP000059680">
    <property type="component" value="Chromosome 5"/>
</dbReference>
<dbReference type="GO" id="GO:0005524">
    <property type="term" value="F:ATP binding"/>
    <property type="evidence" value="ECO:0007669"/>
    <property type="project" value="UniProtKB-KW"/>
</dbReference>
<dbReference type="GO" id="GO:0106310">
    <property type="term" value="F:protein serine kinase activity"/>
    <property type="evidence" value="ECO:0007669"/>
    <property type="project" value="RHEA"/>
</dbReference>
<dbReference type="GO" id="GO:0004674">
    <property type="term" value="F:protein serine/threonine kinase activity"/>
    <property type="evidence" value="ECO:0000318"/>
    <property type="project" value="GO_Central"/>
</dbReference>
<dbReference type="GO" id="GO:0007165">
    <property type="term" value="P:signal transduction"/>
    <property type="evidence" value="ECO:0000318"/>
    <property type="project" value="GO_Central"/>
</dbReference>
<dbReference type="FunFam" id="1.10.510.10:FF:000571">
    <property type="entry name" value="Maternal embryonic leucine zipper kinase"/>
    <property type="match status" value="1"/>
</dbReference>
<dbReference type="Gene3D" id="3.30.310.80">
    <property type="entry name" value="Kinase associated domain 1, KA1"/>
    <property type="match status" value="1"/>
</dbReference>
<dbReference type="Gene3D" id="3.30.200.20">
    <property type="entry name" value="Phosphorylase Kinase, domain 1"/>
    <property type="match status" value="1"/>
</dbReference>
<dbReference type="Gene3D" id="1.10.510.10">
    <property type="entry name" value="Transferase(Phosphotransferase) domain 1"/>
    <property type="match status" value="1"/>
</dbReference>
<dbReference type="InterPro" id="IPR011009">
    <property type="entry name" value="Kinase-like_dom_sf"/>
</dbReference>
<dbReference type="InterPro" id="IPR018451">
    <property type="entry name" value="NAF/FISL_domain"/>
</dbReference>
<dbReference type="InterPro" id="IPR004041">
    <property type="entry name" value="NAF_dom"/>
</dbReference>
<dbReference type="InterPro" id="IPR000719">
    <property type="entry name" value="Prot_kinase_dom"/>
</dbReference>
<dbReference type="InterPro" id="IPR017441">
    <property type="entry name" value="Protein_kinase_ATP_BS"/>
</dbReference>
<dbReference type="InterPro" id="IPR008271">
    <property type="entry name" value="Ser/Thr_kinase_AS"/>
</dbReference>
<dbReference type="PANTHER" id="PTHR43895">
    <property type="entry name" value="CALCIUM/CALMODULIN-DEPENDENT PROTEIN KINASE KINASE-RELATED"/>
    <property type="match status" value="1"/>
</dbReference>
<dbReference type="PANTHER" id="PTHR43895:SF127">
    <property type="entry name" value="CBL-INTERACTING PROTEIN KINASE 22"/>
    <property type="match status" value="1"/>
</dbReference>
<dbReference type="Pfam" id="PF03822">
    <property type="entry name" value="NAF"/>
    <property type="match status" value="1"/>
</dbReference>
<dbReference type="Pfam" id="PF00069">
    <property type="entry name" value="Pkinase"/>
    <property type="match status" value="1"/>
</dbReference>
<dbReference type="SMART" id="SM00220">
    <property type="entry name" value="S_TKc"/>
    <property type="match status" value="1"/>
</dbReference>
<dbReference type="SUPFAM" id="SSF56112">
    <property type="entry name" value="Protein kinase-like (PK-like)"/>
    <property type="match status" value="1"/>
</dbReference>
<dbReference type="PROSITE" id="PS50816">
    <property type="entry name" value="NAF"/>
    <property type="match status" value="1"/>
</dbReference>
<dbReference type="PROSITE" id="PS00107">
    <property type="entry name" value="PROTEIN_KINASE_ATP"/>
    <property type="match status" value="1"/>
</dbReference>
<dbReference type="PROSITE" id="PS50011">
    <property type="entry name" value="PROTEIN_KINASE_DOM"/>
    <property type="match status" value="1"/>
</dbReference>
<dbReference type="PROSITE" id="PS00108">
    <property type="entry name" value="PROTEIN_KINASE_ST"/>
    <property type="match status" value="1"/>
</dbReference>
<keyword id="KW-0067">ATP-binding</keyword>
<keyword id="KW-0418">Kinase</keyword>
<keyword id="KW-0464">Manganese</keyword>
<keyword id="KW-0547">Nucleotide-binding</keyword>
<keyword id="KW-1185">Reference proteome</keyword>
<keyword id="KW-0723">Serine/threonine-protein kinase</keyword>
<keyword id="KW-0808">Transferase</keyword>